<comment type="function">
    <text evidence="1">Binds together with bS18 to 16S ribosomal RNA.</text>
</comment>
<comment type="similarity">
    <text evidence="1">Belongs to the bacterial ribosomal protein bS6 family.</text>
</comment>
<protein>
    <recommendedName>
        <fullName evidence="1">Small ribosomal subunit protein bS6</fullName>
    </recommendedName>
    <alternativeName>
        <fullName evidence="2">30S ribosomal protein S6</fullName>
    </alternativeName>
</protein>
<keyword id="KW-1185">Reference proteome</keyword>
<keyword id="KW-0687">Ribonucleoprotein</keyword>
<keyword id="KW-0689">Ribosomal protein</keyword>
<keyword id="KW-0694">RNA-binding</keyword>
<keyword id="KW-0699">rRNA-binding</keyword>
<sequence>MRNYEITNILREGNVEETKSAVKELLSKYNFTIQGEEDWGSKRLWHPVGQDEQGHFTLIKCSGSPTEVAKIEHEFKLNVNILKTLVIRANG</sequence>
<accession>B0SSW2</accession>
<name>RS6_LEPBP</name>
<feature type="chain" id="PRO_1000120769" description="Small ribosomal subunit protein bS6">
    <location>
        <begin position="1"/>
        <end position="91"/>
    </location>
</feature>
<dbReference type="EMBL" id="CP000786">
    <property type="protein sequence ID" value="ABZ98202.1"/>
    <property type="molecule type" value="Genomic_DNA"/>
</dbReference>
<dbReference type="RefSeq" id="WP_012389072.1">
    <property type="nucleotide sequence ID" value="NC_010602.1"/>
</dbReference>
<dbReference type="SMR" id="B0SSW2"/>
<dbReference type="STRING" id="456481.LEPBI_I2100"/>
<dbReference type="KEGG" id="lbi:LEPBI_I2100"/>
<dbReference type="HOGENOM" id="CLU_113441_5_1_12"/>
<dbReference type="OrthoDB" id="9812702at2"/>
<dbReference type="BioCyc" id="LBIF456481:LEPBI_RS10375-MONOMER"/>
<dbReference type="Proteomes" id="UP000001847">
    <property type="component" value="Chromosome I"/>
</dbReference>
<dbReference type="GO" id="GO:1990904">
    <property type="term" value="C:ribonucleoprotein complex"/>
    <property type="evidence" value="ECO:0007669"/>
    <property type="project" value="UniProtKB-KW"/>
</dbReference>
<dbReference type="GO" id="GO:0005840">
    <property type="term" value="C:ribosome"/>
    <property type="evidence" value="ECO:0007669"/>
    <property type="project" value="UniProtKB-KW"/>
</dbReference>
<dbReference type="GO" id="GO:0019843">
    <property type="term" value="F:rRNA binding"/>
    <property type="evidence" value="ECO:0007669"/>
    <property type="project" value="UniProtKB-UniRule"/>
</dbReference>
<dbReference type="GO" id="GO:0003735">
    <property type="term" value="F:structural constituent of ribosome"/>
    <property type="evidence" value="ECO:0007669"/>
    <property type="project" value="InterPro"/>
</dbReference>
<dbReference type="GO" id="GO:0006412">
    <property type="term" value="P:translation"/>
    <property type="evidence" value="ECO:0007669"/>
    <property type="project" value="UniProtKB-UniRule"/>
</dbReference>
<dbReference type="CDD" id="cd00473">
    <property type="entry name" value="bS6"/>
    <property type="match status" value="1"/>
</dbReference>
<dbReference type="Gene3D" id="3.30.70.60">
    <property type="match status" value="1"/>
</dbReference>
<dbReference type="HAMAP" id="MF_00360">
    <property type="entry name" value="Ribosomal_bS6"/>
    <property type="match status" value="1"/>
</dbReference>
<dbReference type="InterPro" id="IPR000529">
    <property type="entry name" value="Ribosomal_bS6"/>
</dbReference>
<dbReference type="InterPro" id="IPR035980">
    <property type="entry name" value="Ribosomal_bS6_sf"/>
</dbReference>
<dbReference type="InterPro" id="IPR020814">
    <property type="entry name" value="Ribosomal_S6_plastid/chlpt"/>
</dbReference>
<dbReference type="InterPro" id="IPR014717">
    <property type="entry name" value="Transl_elong_EF1B/ribsomal_bS6"/>
</dbReference>
<dbReference type="NCBIfam" id="TIGR00166">
    <property type="entry name" value="S6"/>
    <property type="match status" value="1"/>
</dbReference>
<dbReference type="Pfam" id="PF01250">
    <property type="entry name" value="Ribosomal_S6"/>
    <property type="match status" value="1"/>
</dbReference>
<dbReference type="SUPFAM" id="SSF54995">
    <property type="entry name" value="Ribosomal protein S6"/>
    <property type="match status" value="1"/>
</dbReference>
<proteinExistence type="inferred from homology"/>
<reference key="1">
    <citation type="journal article" date="2008" name="PLoS ONE">
        <title>Genome sequence of the saprophyte Leptospira biflexa provides insights into the evolution of Leptospira and the pathogenesis of leptospirosis.</title>
        <authorList>
            <person name="Picardeau M."/>
            <person name="Bulach D.M."/>
            <person name="Bouchier C."/>
            <person name="Zuerner R.L."/>
            <person name="Zidane N."/>
            <person name="Wilson P.J."/>
            <person name="Creno S."/>
            <person name="Kuczek E.S."/>
            <person name="Bommezzadri S."/>
            <person name="Davis J.C."/>
            <person name="McGrath A."/>
            <person name="Johnson M.J."/>
            <person name="Boursaux-Eude C."/>
            <person name="Seemann T."/>
            <person name="Rouy Z."/>
            <person name="Coppel R.L."/>
            <person name="Rood J.I."/>
            <person name="Lajus A."/>
            <person name="Davies J.K."/>
            <person name="Medigue C."/>
            <person name="Adler B."/>
        </authorList>
    </citation>
    <scope>NUCLEOTIDE SEQUENCE [LARGE SCALE GENOMIC DNA]</scope>
    <source>
        <strain>Patoc 1 / ATCC 23582 / Paris</strain>
    </source>
</reference>
<evidence type="ECO:0000255" key="1">
    <source>
        <dbReference type="HAMAP-Rule" id="MF_00360"/>
    </source>
</evidence>
<evidence type="ECO:0000305" key="2"/>
<gene>
    <name evidence="1" type="primary">rpsF</name>
    <name type="ordered locus">LEPBI_I2100</name>
</gene>
<organism>
    <name type="scientific">Leptospira biflexa serovar Patoc (strain Patoc 1 / ATCC 23582 / Paris)</name>
    <dbReference type="NCBI Taxonomy" id="456481"/>
    <lineage>
        <taxon>Bacteria</taxon>
        <taxon>Pseudomonadati</taxon>
        <taxon>Spirochaetota</taxon>
        <taxon>Spirochaetia</taxon>
        <taxon>Leptospirales</taxon>
        <taxon>Leptospiraceae</taxon>
        <taxon>Leptospira</taxon>
    </lineage>
</organism>